<keyword id="KW-0002">3D-structure</keyword>
<keyword id="KW-0217">Developmental protein</keyword>
<keyword id="KW-0903">Direct protein sequencing</keyword>
<keyword id="KW-0325">Glycoprotein</keyword>
<keyword id="KW-1267">Proteomics identification</keyword>
<keyword id="KW-1185">Reference proteome</keyword>
<keyword id="KW-0964">Secreted</keyword>
<keyword id="KW-0732">Signal</keyword>
<keyword id="KW-0879">Wnt signaling pathway</keyword>
<reference key="1">
    <citation type="journal article" date="2009" name="Biochem. Biophys. Res. Commun.">
        <title>Neucrin is a novel neural-specific secreted antagonist to canonical Wnt signaling.</title>
        <authorList>
            <person name="Miyake A."/>
            <person name="Takahashi Y."/>
            <person name="Miwa H."/>
            <person name="Shimada A."/>
            <person name="Konishi M."/>
            <person name="Itoh N."/>
        </authorList>
    </citation>
    <scope>NUCLEOTIDE SEQUENCE [MRNA]</scope>
    <scope>VARIANT PHE-37</scope>
</reference>
<reference key="2">
    <citation type="journal article" date="2003" name="Genome Res.">
        <title>The secreted protein discovery initiative (SPDI), a large-scale effort to identify novel human secreted and transmembrane proteins: a bioinformatics assessment.</title>
        <authorList>
            <person name="Clark H.F."/>
            <person name="Gurney A.L."/>
            <person name="Abaya E."/>
            <person name="Baker K."/>
            <person name="Baldwin D.T."/>
            <person name="Brush J."/>
            <person name="Chen J."/>
            <person name="Chow B."/>
            <person name="Chui C."/>
            <person name="Crowley C."/>
            <person name="Currell B."/>
            <person name="Deuel B."/>
            <person name="Dowd P."/>
            <person name="Eaton D."/>
            <person name="Foster J.S."/>
            <person name="Grimaldi C."/>
            <person name="Gu Q."/>
            <person name="Hass P.E."/>
            <person name="Heldens S."/>
            <person name="Huang A."/>
            <person name="Kim H.S."/>
            <person name="Klimowski L."/>
            <person name="Jin Y."/>
            <person name="Johnson S."/>
            <person name="Lee J."/>
            <person name="Lewis L."/>
            <person name="Liao D."/>
            <person name="Mark M.R."/>
            <person name="Robbie E."/>
            <person name="Sanchez C."/>
            <person name="Schoenfeld J."/>
            <person name="Seshagiri S."/>
            <person name="Simmons L."/>
            <person name="Singh J."/>
            <person name="Smith V."/>
            <person name="Stinson J."/>
            <person name="Vagts A."/>
            <person name="Vandlen R.L."/>
            <person name="Watanabe C."/>
            <person name="Wieand D."/>
            <person name="Woods K."/>
            <person name="Xie M.-H."/>
            <person name="Yansura D.G."/>
            <person name="Yi S."/>
            <person name="Yu G."/>
            <person name="Yuan J."/>
            <person name="Zhang M."/>
            <person name="Zhang Z."/>
            <person name="Goddard A.D."/>
            <person name="Wood W.I."/>
            <person name="Godowski P.J."/>
            <person name="Gray A.M."/>
        </authorList>
    </citation>
    <scope>NUCLEOTIDE SEQUENCE [LARGE SCALE MRNA]</scope>
</reference>
<reference key="3">
    <citation type="journal article" date="2005" name="DNA Res.">
        <title>Signal sequence and keyword trap in silico for selection of full-length human cDNAs encoding secretion or membrane proteins from oligo-capped cDNA libraries.</title>
        <authorList>
            <person name="Otsuki T."/>
            <person name="Ota T."/>
            <person name="Nishikawa T."/>
            <person name="Hayashi K."/>
            <person name="Suzuki Y."/>
            <person name="Yamamoto J."/>
            <person name="Wakamatsu A."/>
            <person name="Kimura K."/>
            <person name="Sakamoto K."/>
            <person name="Hatano N."/>
            <person name="Kawai Y."/>
            <person name="Ishii S."/>
            <person name="Saito K."/>
            <person name="Kojima S."/>
            <person name="Sugiyama T."/>
            <person name="Ono T."/>
            <person name="Okano K."/>
            <person name="Yoshikawa Y."/>
            <person name="Aotsuka S."/>
            <person name="Sasaki N."/>
            <person name="Hattori A."/>
            <person name="Okumura K."/>
            <person name="Nagai K."/>
            <person name="Sugano S."/>
            <person name="Isogai T."/>
        </authorList>
    </citation>
    <scope>NUCLEOTIDE SEQUENCE [LARGE SCALE MRNA]</scope>
    <scope>VARIANT PHE-37</scope>
</reference>
<reference key="4">
    <citation type="journal article" date="2006" name="Nature">
        <title>The DNA sequence and biological annotation of human chromosome 1.</title>
        <authorList>
            <person name="Gregory S.G."/>
            <person name="Barlow K.F."/>
            <person name="McLay K.E."/>
            <person name="Kaul R."/>
            <person name="Swarbreck D."/>
            <person name="Dunham A."/>
            <person name="Scott C.E."/>
            <person name="Howe K.L."/>
            <person name="Woodfine K."/>
            <person name="Spencer C.C.A."/>
            <person name="Jones M.C."/>
            <person name="Gillson C."/>
            <person name="Searle S."/>
            <person name="Zhou Y."/>
            <person name="Kokocinski F."/>
            <person name="McDonald L."/>
            <person name="Evans R."/>
            <person name="Phillips K."/>
            <person name="Atkinson A."/>
            <person name="Cooper R."/>
            <person name="Jones C."/>
            <person name="Hall R.E."/>
            <person name="Andrews T.D."/>
            <person name="Lloyd C."/>
            <person name="Ainscough R."/>
            <person name="Almeida J.P."/>
            <person name="Ambrose K.D."/>
            <person name="Anderson F."/>
            <person name="Andrew R.W."/>
            <person name="Ashwell R.I.S."/>
            <person name="Aubin K."/>
            <person name="Babbage A.K."/>
            <person name="Bagguley C.L."/>
            <person name="Bailey J."/>
            <person name="Beasley H."/>
            <person name="Bethel G."/>
            <person name="Bird C.P."/>
            <person name="Bray-Allen S."/>
            <person name="Brown J.Y."/>
            <person name="Brown A.J."/>
            <person name="Buckley D."/>
            <person name="Burton J."/>
            <person name="Bye J."/>
            <person name="Carder C."/>
            <person name="Chapman J.C."/>
            <person name="Clark S.Y."/>
            <person name="Clarke G."/>
            <person name="Clee C."/>
            <person name="Cobley V."/>
            <person name="Collier R.E."/>
            <person name="Corby N."/>
            <person name="Coville G.J."/>
            <person name="Davies J."/>
            <person name="Deadman R."/>
            <person name="Dunn M."/>
            <person name="Earthrowl M."/>
            <person name="Ellington A.G."/>
            <person name="Errington H."/>
            <person name="Frankish A."/>
            <person name="Frankland J."/>
            <person name="French L."/>
            <person name="Garner P."/>
            <person name="Garnett J."/>
            <person name="Gay L."/>
            <person name="Ghori M.R.J."/>
            <person name="Gibson R."/>
            <person name="Gilby L.M."/>
            <person name="Gillett W."/>
            <person name="Glithero R.J."/>
            <person name="Grafham D.V."/>
            <person name="Griffiths C."/>
            <person name="Griffiths-Jones S."/>
            <person name="Grocock R."/>
            <person name="Hammond S."/>
            <person name="Harrison E.S.I."/>
            <person name="Hart E."/>
            <person name="Haugen E."/>
            <person name="Heath P.D."/>
            <person name="Holmes S."/>
            <person name="Holt K."/>
            <person name="Howden P.J."/>
            <person name="Hunt A.R."/>
            <person name="Hunt S.E."/>
            <person name="Hunter G."/>
            <person name="Isherwood J."/>
            <person name="James R."/>
            <person name="Johnson C."/>
            <person name="Johnson D."/>
            <person name="Joy A."/>
            <person name="Kay M."/>
            <person name="Kershaw J.K."/>
            <person name="Kibukawa M."/>
            <person name="Kimberley A.M."/>
            <person name="King A."/>
            <person name="Knights A.J."/>
            <person name="Lad H."/>
            <person name="Laird G."/>
            <person name="Lawlor S."/>
            <person name="Leongamornlert D.A."/>
            <person name="Lloyd D.M."/>
            <person name="Loveland J."/>
            <person name="Lovell J."/>
            <person name="Lush M.J."/>
            <person name="Lyne R."/>
            <person name="Martin S."/>
            <person name="Mashreghi-Mohammadi M."/>
            <person name="Matthews L."/>
            <person name="Matthews N.S.W."/>
            <person name="McLaren S."/>
            <person name="Milne S."/>
            <person name="Mistry S."/>
            <person name="Moore M.J.F."/>
            <person name="Nickerson T."/>
            <person name="O'Dell C.N."/>
            <person name="Oliver K."/>
            <person name="Palmeiri A."/>
            <person name="Palmer S.A."/>
            <person name="Parker A."/>
            <person name="Patel D."/>
            <person name="Pearce A.V."/>
            <person name="Peck A.I."/>
            <person name="Pelan S."/>
            <person name="Phelps K."/>
            <person name="Phillimore B.J."/>
            <person name="Plumb R."/>
            <person name="Rajan J."/>
            <person name="Raymond C."/>
            <person name="Rouse G."/>
            <person name="Saenphimmachak C."/>
            <person name="Sehra H.K."/>
            <person name="Sheridan E."/>
            <person name="Shownkeen R."/>
            <person name="Sims S."/>
            <person name="Skuce C.D."/>
            <person name="Smith M."/>
            <person name="Steward C."/>
            <person name="Subramanian S."/>
            <person name="Sycamore N."/>
            <person name="Tracey A."/>
            <person name="Tromans A."/>
            <person name="Van Helmond Z."/>
            <person name="Wall M."/>
            <person name="Wallis J.M."/>
            <person name="White S."/>
            <person name="Whitehead S.L."/>
            <person name="Wilkinson J.E."/>
            <person name="Willey D.L."/>
            <person name="Williams H."/>
            <person name="Wilming L."/>
            <person name="Wray P.W."/>
            <person name="Wu Z."/>
            <person name="Coulson A."/>
            <person name="Vaudin M."/>
            <person name="Sulston J.E."/>
            <person name="Durbin R.M."/>
            <person name="Hubbard T."/>
            <person name="Wooster R."/>
            <person name="Dunham I."/>
            <person name="Carter N.P."/>
            <person name="McVean G."/>
            <person name="Ross M.T."/>
            <person name="Harrow J."/>
            <person name="Olson M.V."/>
            <person name="Beck S."/>
            <person name="Rogers J."/>
            <person name="Bentley D.R."/>
        </authorList>
    </citation>
    <scope>NUCLEOTIDE SEQUENCE [LARGE SCALE GENOMIC DNA]</scope>
</reference>
<reference key="5">
    <citation type="journal article" date="2004" name="Genome Res.">
        <title>The status, quality, and expansion of the NIH full-length cDNA project: the Mammalian Gene Collection (MGC).</title>
        <authorList>
            <consortium name="The MGC Project Team"/>
        </authorList>
    </citation>
    <scope>NUCLEOTIDE SEQUENCE [LARGE SCALE MRNA]</scope>
    <source>
        <tissue>Fetal brain</tissue>
    </source>
</reference>
<reference key="6">
    <citation type="journal article" date="2004" name="Protein Sci.">
        <title>Signal peptide prediction based on analysis of experimentally verified cleavage sites.</title>
        <authorList>
            <person name="Zhang Z."/>
            <person name="Henzel W.J."/>
        </authorList>
    </citation>
    <scope>PROTEIN SEQUENCE OF 26-40</scope>
    <scope>VARIANT PHE-37</scope>
</reference>
<sequence>MAGPAIHTAPMLFLVLLLPLELSLAGALAPGTPARNLPENHIDLPGPALWTPQASHHRRRGPGKKEWGPGLPSQAQDGAVVTATRQASRLPEAEGLLPEQSPAGLLQDKDLLLGLALPYPEKENRPPGWERTRKRSREHKRRRDRLRLHQGRALVRGPSSLMKKAELSEAQVLDAAMEESSTSLAPTMFFLTTFEAAPATEESLILPVTSLRPQQAQPRSDGEVMPTLDMALFDWTDYEDLKPDGWPSAKKKEKHRGKLSSDGNETSPAEGEPCDHHQDCLPGTCCDLREHLCTPHNRGLNNKCFDDCMCVEGLRCYAKFHRNRRVTRRKGRCVEPETANGDQGSFINV</sequence>
<dbReference type="EMBL" id="AB301919">
    <property type="protein sequence ID" value="BAG80561.1"/>
    <property type="molecule type" value="mRNA"/>
</dbReference>
<dbReference type="EMBL" id="AY358750">
    <property type="protein sequence ID" value="AAQ89110.1"/>
    <property type="molecule type" value="mRNA"/>
</dbReference>
<dbReference type="EMBL" id="AK075558">
    <property type="protein sequence ID" value="BAC11697.1"/>
    <property type="molecule type" value="mRNA"/>
</dbReference>
<dbReference type="EMBL" id="AL953897">
    <property type="status" value="NOT_ANNOTATED_CDS"/>
    <property type="molecule type" value="Genomic_DNA"/>
</dbReference>
<dbReference type="EMBL" id="AL031731">
    <property type="status" value="NOT_ANNOTATED_CDS"/>
    <property type="molecule type" value="Genomic_DNA"/>
</dbReference>
<dbReference type="EMBL" id="BC111064">
    <property type="protein sequence ID" value="AAI11065.1"/>
    <property type="molecule type" value="mRNA"/>
</dbReference>
<dbReference type="CCDS" id="CCDS135.1"/>
<dbReference type="RefSeq" id="NP_940947.3">
    <property type="nucleotide sequence ID" value="NM_198545.3"/>
</dbReference>
<dbReference type="PDB" id="6FKQ">
    <property type="method" value="X-ray"/>
    <property type="resolution" value="3.07 A"/>
    <property type="chains" value="B=225-243"/>
</dbReference>
<dbReference type="PDBsum" id="6FKQ"/>
<dbReference type="SASBDB" id="Q8NBI3"/>
<dbReference type="SMR" id="Q8NBI3"/>
<dbReference type="FunCoup" id="Q8NBI3">
    <property type="interactions" value="198"/>
</dbReference>
<dbReference type="IntAct" id="Q8NBI3">
    <property type="interactions" value="3"/>
</dbReference>
<dbReference type="STRING" id="9606.ENSP00000294485"/>
<dbReference type="GlyCosmos" id="Q8NBI3">
    <property type="glycosylation" value="1 site, No reported glycans"/>
</dbReference>
<dbReference type="GlyGen" id="Q8NBI3">
    <property type="glycosylation" value="4 sites, 2 O-linked glycans (3 sites)"/>
</dbReference>
<dbReference type="iPTMnet" id="Q8NBI3"/>
<dbReference type="PhosphoSitePlus" id="Q8NBI3"/>
<dbReference type="BioMuta" id="DRAXIN"/>
<dbReference type="DMDM" id="124007126"/>
<dbReference type="MassIVE" id="Q8NBI3"/>
<dbReference type="PaxDb" id="9606-ENSP00000294485"/>
<dbReference type="PeptideAtlas" id="Q8NBI3"/>
<dbReference type="ProteomicsDB" id="72771"/>
<dbReference type="Antibodypedia" id="2659">
    <property type="antibodies" value="147 antibodies from 26 providers"/>
</dbReference>
<dbReference type="DNASU" id="374946"/>
<dbReference type="Ensembl" id="ENST00000294485.6">
    <property type="protein sequence ID" value="ENSP00000294485.5"/>
    <property type="gene ID" value="ENSG00000162490.7"/>
</dbReference>
<dbReference type="GeneID" id="374946"/>
<dbReference type="KEGG" id="hsa:374946"/>
<dbReference type="MANE-Select" id="ENST00000294485.6">
    <property type="protein sequence ID" value="ENSP00000294485.5"/>
    <property type="RefSeq nucleotide sequence ID" value="NM_198545.4"/>
    <property type="RefSeq protein sequence ID" value="NP_940947.3"/>
</dbReference>
<dbReference type="UCSC" id="uc001ass.4">
    <property type="organism name" value="human"/>
</dbReference>
<dbReference type="AGR" id="HGNC:25054"/>
<dbReference type="CTD" id="374946"/>
<dbReference type="DisGeNET" id="374946"/>
<dbReference type="GeneCards" id="DRAXIN"/>
<dbReference type="HGNC" id="HGNC:25054">
    <property type="gene designation" value="DRAXIN"/>
</dbReference>
<dbReference type="HPA" id="ENSG00000162490">
    <property type="expression patterns" value="Tissue enhanced (brain)"/>
</dbReference>
<dbReference type="MIM" id="612682">
    <property type="type" value="gene"/>
</dbReference>
<dbReference type="neXtProt" id="NX_Q8NBI3"/>
<dbReference type="OpenTargets" id="ENSG00000162490"/>
<dbReference type="PharmGKB" id="PA142672435"/>
<dbReference type="VEuPathDB" id="HostDB:ENSG00000162490"/>
<dbReference type="eggNOG" id="ENOG502QUE0">
    <property type="taxonomic scope" value="Eukaryota"/>
</dbReference>
<dbReference type="GeneTree" id="ENSGT00390000013828"/>
<dbReference type="HOGENOM" id="CLU_063473_0_0_1"/>
<dbReference type="InParanoid" id="Q8NBI3"/>
<dbReference type="OMA" id="WTPQTSH"/>
<dbReference type="OrthoDB" id="9931375at2759"/>
<dbReference type="PAN-GO" id="Q8NBI3">
    <property type="GO annotations" value="6 GO annotations based on evolutionary models"/>
</dbReference>
<dbReference type="PhylomeDB" id="Q8NBI3"/>
<dbReference type="TreeFam" id="TF333255"/>
<dbReference type="PathwayCommons" id="Q8NBI3"/>
<dbReference type="SignaLink" id="Q8NBI3"/>
<dbReference type="BioGRID-ORCS" id="374946">
    <property type="hits" value="7 hits in 1137 CRISPR screens"/>
</dbReference>
<dbReference type="GenomeRNAi" id="374946"/>
<dbReference type="Pharos" id="Q8NBI3">
    <property type="development level" value="Tbio"/>
</dbReference>
<dbReference type="PRO" id="PR:Q8NBI3"/>
<dbReference type="Proteomes" id="UP000005640">
    <property type="component" value="Chromosome 1"/>
</dbReference>
<dbReference type="RNAct" id="Q8NBI3">
    <property type="molecule type" value="protein"/>
</dbReference>
<dbReference type="Bgee" id="ENSG00000162490">
    <property type="expression patterns" value="Expressed in cortical plate and 44 other cell types or tissues"/>
</dbReference>
<dbReference type="GO" id="GO:0005576">
    <property type="term" value="C:extracellular region"/>
    <property type="evidence" value="ECO:0000250"/>
    <property type="project" value="UniProtKB"/>
</dbReference>
<dbReference type="GO" id="GO:0060090">
    <property type="term" value="F:molecular adaptor activity"/>
    <property type="evidence" value="ECO:0000269"/>
    <property type="project" value="DisProt"/>
</dbReference>
<dbReference type="GO" id="GO:0021960">
    <property type="term" value="P:anterior commissure morphogenesis"/>
    <property type="evidence" value="ECO:0007669"/>
    <property type="project" value="Ensembl"/>
</dbReference>
<dbReference type="GO" id="GO:0007411">
    <property type="term" value="P:axon guidance"/>
    <property type="evidence" value="ECO:0000250"/>
    <property type="project" value="UniProtKB"/>
</dbReference>
<dbReference type="GO" id="GO:0021528">
    <property type="term" value="P:commissural neuron differentiation in spinal cord"/>
    <property type="evidence" value="ECO:0000250"/>
    <property type="project" value="UniProtKB"/>
</dbReference>
<dbReference type="GO" id="GO:0021516">
    <property type="term" value="P:dorsal spinal cord development"/>
    <property type="evidence" value="ECO:0000250"/>
    <property type="project" value="UniProtKB"/>
</dbReference>
<dbReference type="GO" id="GO:0030900">
    <property type="term" value="P:forebrain development"/>
    <property type="evidence" value="ECO:0000250"/>
    <property type="project" value="UniProtKB"/>
</dbReference>
<dbReference type="GO" id="GO:0110088">
    <property type="term" value="P:hippocampal neuron apoptotic process"/>
    <property type="evidence" value="ECO:0007669"/>
    <property type="project" value="Ensembl"/>
</dbReference>
<dbReference type="GO" id="GO:0030517">
    <property type="term" value="P:negative regulation of axon extension"/>
    <property type="evidence" value="ECO:0007669"/>
    <property type="project" value="Ensembl"/>
</dbReference>
<dbReference type="GO" id="GO:0090090">
    <property type="term" value="P:negative regulation of canonical Wnt signaling pathway"/>
    <property type="evidence" value="ECO:0000250"/>
    <property type="project" value="UniProtKB"/>
</dbReference>
<dbReference type="GO" id="GO:0110091">
    <property type="term" value="P:negative regulation of hippocampal neuron apoptotic process"/>
    <property type="evidence" value="ECO:0007669"/>
    <property type="project" value="Ensembl"/>
</dbReference>
<dbReference type="GO" id="GO:0016055">
    <property type="term" value="P:Wnt signaling pathway"/>
    <property type="evidence" value="ECO:0007669"/>
    <property type="project" value="UniProtKB-KW"/>
</dbReference>
<dbReference type="DisProt" id="DP02904"/>
<dbReference type="HAMAP" id="MF_03060">
    <property type="entry name" value="Draxin"/>
    <property type="match status" value="1"/>
</dbReference>
<dbReference type="InterPro" id="IPR029094">
    <property type="entry name" value="Draxin"/>
</dbReference>
<dbReference type="PANTHER" id="PTHR28610">
    <property type="entry name" value="DRAXIN"/>
    <property type="match status" value="1"/>
</dbReference>
<dbReference type="PANTHER" id="PTHR28610:SF1">
    <property type="entry name" value="DRAXIN"/>
    <property type="match status" value="1"/>
</dbReference>
<dbReference type="Pfam" id="PF15550">
    <property type="entry name" value="Draxin"/>
    <property type="match status" value="1"/>
</dbReference>
<protein>
    <recommendedName>
        <fullName evidence="1">Draxin</fullName>
    </recommendedName>
    <alternativeName>
        <fullName evidence="1">Dorsal inhibitory axon guidance protein</fullName>
    </alternativeName>
    <alternativeName>
        <fullName evidence="1">Dorsal repulsive axon guidance protein</fullName>
    </alternativeName>
    <alternativeName>
        <fullName>Neucrin</fullName>
    </alternativeName>
</protein>
<gene>
    <name evidence="1" type="primary">DRAXIN</name>
    <name type="synonym">C1orf187</name>
    <name type="ORF">PSEC0258</name>
    <name type="ORF">UNQ3119/PRO10268</name>
</gene>
<proteinExistence type="evidence at protein level"/>
<comment type="function">
    <text evidence="1">Chemorepulsive axon guidance protein required for the development of spinal cord and forebrain commissures. Acts as a chemorepulsive guidance protein for commissural axons during development. Able to inhibit or repel neurite outgrowth from dorsal spinal cord. Inhibits the stabilization of cytosolic beta-catenin (CTNNB1) via its interaction with LRP6, thereby acting as an antagonist of Wnt signaling pathway.</text>
</comment>
<comment type="subunit">
    <text evidence="1">Interacts with LRP6.</text>
</comment>
<comment type="interaction">
    <interactant intactId="EBI-10827752">
        <id>Q8NBI3</id>
    </interactant>
    <interactant intactId="EBI-2678626">
        <id>O95631</id>
        <label>NTN1</label>
    </interactant>
    <organismsDiffer>false</organismsDiffer>
    <experiments>3</experiments>
</comment>
<comment type="interaction">
    <interactant intactId="EBI-10827752">
        <id>Q8NBI3</id>
    </interactant>
    <interactant intactId="EBI-10831998">
        <id>O00634</id>
        <label>NTN3</label>
    </interactant>
    <organismsDiffer>false</organismsDiffer>
    <experiments>2</experiments>
</comment>
<comment type="subcellular location">
    <subcellularLocation>
        <location evidence="6">Secreted</location>
    </subcellularLocation>
</comment>
<comment type="similarity">
    <text evidence="1">Belongs to the draxin family.</text>
</comment>
<evidence type="ECO:0000255" key="1">
    <source>
        <dbReference type="HAMAP-Rule" id="MF_03060"/>
    </source>
</evidence>
<evidence type="ECO:0000256" key="2">
    <source>
        <dbReference type="SAM" id="MobiDB-lite"/>
    </source>
</evidence>
<evidence type="ECO:0000269" key="3">
    <source>
    </source>
</evidence>
<evidence type="ECO:0000269" key="4">
    <source>
    </source>
</evidence>
<evidence type="ECO:0000269" key="5">
    <source>
    </source>
</evidence>
<evidence type="ECO:0000305" key="6"/>
<evidence type="ECO:0007829" key="7">
    <source>
        <dbReference type="PDB" id="6FKQ"/>
    </source>
</evidence>
<feature type="signal peptide" evidence="1 3">
    <location>
        <begin position="1"/>
        <end position="25"/>
    </location>
</feature>
<feature type="chain" id="PRO_0000273243" description="Draxin">
    <location>
        <begin position="26"/>
        <end position="349"/>
    </location>
</feature>
<feature type="region of interest" description="Disordered" evidence="2">
    <location>
        <begin position="38"/>
        <end position="79"/>
    </location>
</feature>
<feature type="region of interest" description="Disordered" evidence="2">
    <location>
        <begin position="118"/>
        <end position="145"/>
    </location>
</feature>
<feature type="region of interest" description="Disordered" evidence="2">
    <location>
        <begin position="244"/>
        <end position="273"/>
    </location>
</feature>
<feature type="compositionally biased region" description="Basic and acidic residues" evidence="2">
    <location>
        <begin position="120"/>
        <end position="131"/>
    </location>
</feature>
<feature type="compositionally biased region" description="Basic residues" evidence="2">
    <location>
        <begin position="132"/>
        <end position="145"/>
    </location>
</feature>
<feature type="compositionally biased region" description="Basic residues" evidence="2">
    <location>
        <begin position="249"/>
        <end position="258"/>
    </location>
</feature>
<feature type="glycosylation site" description="N-linked (GlcNAc...) asparagine" evidence="1">
    <location>
        <position position="264"/>
    </location>
</feature>
<feature type="sequence variant" id="VAR_030114" description="In dbSNP:rs11121804." evidence="3 4 5">
    <original>L</original>
    <variation>F</variation>
    <location>
        <position position="37"/>
    </location>
</feature>
<feature type="sequence conflict" description="In Ref. 1; AAQ89110." evidence="6" ref="1">
    <original>LE</original>
    <variation>Q</variation>
    <location>
        <begin position="20"/>
        <end position="21"/>
    </location>
</feature>
<feature type="strand" evidence="7">
    <location>
        <begin position="236"/>
        <end position="238"/>
    </location>
</feature>
<feature type="helix" evidence="7">
    <location>
        <begin position="239"/>
        <end position="241"/>
    </location>
</feature>
<accession>Q8NBI3</accession>
<accession>B6EV15</accession>
<accession>Q5SNX0</accession>
<accession>Q6UWK8</accession>
<name>DRAXI_HUMAN</name>
<organism>
    <name type="scientific">Homo sapiens</name>
    <name type="common">Human</name>
    <dbReference type="NCBI Taxonomy" id="9606"/>
    <lineage>
        <taxon>Eukaryota</taxon>
        <taxon>Metazoa</taxon>
        <taxon>Chordata</taxon>
        <taxon>Craniata</taxon>
        <taxon>Vertebrata</taxon>
        <taxon>Euteleostomi</taxon>
        <taxon>Mammalia</taxon>
        <taxon>Eutheria</taxon>
        <taxon>Euarchontoglires</taxon>
        <taxon>Primates</taxon>
        <taxon>Haplorrhini</taxon>
        <taxon>Catarrhini</taxon>
        <taxon>Hominidae</taxon>
        <taxon>Homo</taxon>
    </lineage>
</organism>